<proteinExistence type="inferred from homology"/>
<organism>
    <name type="scientific">Paraburkholderia xenovorans (strain LB400)</name>
    <dbReference type="NCBI Taxonomy" id="266265"/>
    <lineage>
        <taxon>Bacteria</taxon>
        <taxon>Pseudomonadati</taxon>
        <taxon>Pseudomonadota</taxon>
        <taxon>Betaproteobacteria</taxon>
        <taxon>Burkholderiales</taxon>
        <taxon>Burkholderiaceae</taxon>
        <taxon>Paraburkholderia</taxon>
    </lineage>
</organism>
<protein>
    <recommendedName>
        <fullName evidence="1">ATP synthase epsilon chain 2</fullName>
    </recommendedName>
    <alternativeName>
        <fullName evidence="1">ATP synthase F1 sector epsilon subunit 2</fullName>
    </alternativeName>
    <alternativeName>
        <fullName evidence="1">F-ATPase epsilon subunit 2</fullName>
    </alternativeName>
</protein>
<dbReference type="EMBL" id="CP000272">
    <property type="protein sequence ID" value="ABE35975.1"/>
    <property type="molecule type" value="Genomic_DNA"/>
</dbReference>
<dbReference type="RefSeq" id="WP_011493235.1">
    <property type="nucleotide sequence ID" value="NC_007953.1"/>
</dbReference>
<dbReference type="SMR" id="Q13IW4"/>
<dbReference type="STRING" id="266265.Bxe_C0048"/>
<dbReference type="KEGG" id="bxb:DR64_8376"/>
<dbReference type="KEGG" id="bxe:Bxe_C0048"/>
<dbReference type="PATRIC" id="fig|266265.5.peg.7828"/>
<dbReference type="eggNOG" id="COG0355">
    <property type="taxonomic scope" value="Bacteria"/>
</dbReference>
<dbReference type="OrthoDB" id="8546953at2"/>
<dbReference type="Proteomes" id="UP000001817">
    <property type="component" value="Chromosome 3"/>
</dbReference>
<dbReference type="GO" id="GO:0005886">
    <property type="term" value="C:plasma membrane"/>
    <property type="evidence" value="ECO:0007669"/>
    <property type="project" value="UniProtKB-SubCell"/>
</dbReference>
<dbReference type="GO" id="GO:0045259">
    <property type="term" value="C:proton-transporting ATP synthase complex"/>
    <property type="evidence" value="ECO:0007669"/>
    <property type="project" value="UniProtKB-KW"/>
</dbReference>
<dbReference type="GO" id="GO:0005524">
    <property type="term" value="F:ATP binding"/>
    <property type="evidence" value="ECO:0007669"/>
    <property type="project" value="UniProtKB-UniRule"/>
</dbReference>
<dbReference type="GO" id="GO:0046933">
    <property type="term" value="F:proton-transporting ATP synthase activity, rotational mechanism"/>
    <property type="evidence" value="ECO:0007669"/>
    <property type="project" value="UniProtKB-UniRule"/>
</dbReference>
<dbReference type="CDD" id="cd12152">
    <property type="entry name" value="F1-ATPase_delta"/>
    <property type="match status" value="1"/>
</dbReference>
<dbReference type="Gene3D" id="2.60.15.10">
    <property type="entry name" value="F0F1 ATP synthase delta/epsilon subunit, N-terminal"/>
    <property type="match status" value="1"/>
</dbReference>
<dbReference type="HAMAP" id="MF_00530">
    <property type="entry name" value="ATP_synth_epsil_bac"/>
    <property type="match status" value="1"/>
</dbReference>
<dbReference type="InterPro" id="IPR024037">
    <property type="entry name" value="Alt_ATP_synth_F1_esu"/>
</dbReference>
<dbReference type="InterPro" id="IPR001469">
    <property type="entry name" value="ATP_synth_F1_dsu/esu"/>
</dbReference>
<dbReference type="InterPro" id="IPR020546">
    <property type="entry name" value="ATP_synth_F1_dsu/esu_N"/>
</dbReference>
<dbReference type="InterPro" id="IPR036771">
    <property type="entry name" value="ATPsynth_dsu/esu_N"/>
</dbReference>
<dbReference type="NCBIfam" id="TIGR03166">
    <property type="entry name" value="alt_F1F0_F1_eps"/>
    <property type="match status" value="1"/>
</dbReference>
<dbReference type="NCBIfam" id="NF009981">
    <property type="entry name" value="PRK13447.1"/>
    <property type="match status" value="1"/>
</dbReference>
<dbReference type="Pfam" id="PF02823">
    <property type="entry name" value="ATP-synt_DE_N"/>
    <property type="match status" value="1"/>
</dbReference>
<dbReference type="SUPFAM" id="SSF51344">
    <property type="entry name" value="Epsilon subunit of F1F0-ATP synthase N-terminal domain"/>
    <property type="match status" value="1"/>
</dbReference>
<evidence type="ECO:0000255" key="1">
    <source>
        <dbReference type="HAMAP-Rule" id="MF_00530"/>
    </source>
</evidence>
<reference key="1">
    <citation type="journal article" date="2006" name="Proc. Natl. Acad. Sci. U.S.A.">
        <title>Burkholderia xenovorans LB400 harbors a multi-replicon, 9.73-Mbp genome shaped for versatility.</title>
        <authorList>
            <person name="Chain P.S.G."/>
            <person name="Denef V.J."/>
            <person name="Konstantinidis K.T."/>
            <person name="Vergez L.M."/>
            <person name="Agullo L."/>
            <person name="Reyes V.L."/>
            <person name="Hauser L."/>
            <person name="Cordova M."/>
            <person name="Gomez L."/>
            <person name="Gonzalez M."/>
            <person name="Land M."/>
            <person name="Lao V."/>
            <person name="Larimer F."/>
            <person name="LiPuma J.J."/>
            <person name="Mahenthiralingam E."/>
            <person name="Malfatti S.A."/>
            <person name="Marx C.J."/>
            <person name="Parnell J.J."/>
            <person name="Ramette A."/>
            <person name="Richardson P."/>
            <person name="Seeger M."/>
            <person name="Smith D."/>
            <person name="Spilker T."/>
            <person name="Sul W.J."/>
            <person name="Tsoi T.V."/>
            <person name="Ulrich L.E."/>
            <person name="Zhulin I.B."/>
            <person name="Tiedje J.M."/>
        </authorList>
    </citation>
    <scope>NUCLEOTIDE SEQUENCE [LARGE SCALE GENOMIC DNA]</scope>
    <source>
        <strain>LB400</strain>
    </source>
</reference>
<accession>Q13IW4</accession>
<sequence length="139" mass="15064">MSPTLRLTISTPASLLVNAQAIVALRAEDGSGSFGILPGHADFLTVLTPCVLRWRGTENIRRFCAVEEGVLRVSEGHSVTIACRSGMLGDSLAALEAQIETARARTLDTARNARVEQTRLHAQAVRQLLRYLRPSRGDA</sequence>
<feature type="chain" id="PRO_0000265797" description="ATP synthase epsilon chain 2">
    <location>
        <begin position="1"/>
        <end position="139"/>
    </location>
</feature>
<name>ATPE2_PARXL</name>
<comment type="function">
    <text evidence="1">Produces ATP from ADP in the presence of a proton gradient across the membrane.</text>
</comment>
<comment type="subunit">
    <text>F-type ATPases have 2 components, CF(1) - the catalytic core - and CF(0) - the membrane proton channel. CF(1) has five subunits: alpha(3), beta(3), gamma(1), delta(1), epsilon(1). CF(0) has three main subunits: a, b and c.</text>
</comment>
<comment type="subcellular location">
    <subcellularLocation>
        <location evidence="1">Cell inner membrane</location>
        <topology evidence="1">Peripheral membrane protein</topology>
    </subcellularLocation>
</comment>
<comment type="similarity">
    <text evidence="1">Belongs to the ATPase epsilon chain family.</text>
</comment>
<keyword id="KW-0066">ATP synthesis</keyword>
<keyword id="KW-0997">Cell inner membrane</keyword>
<keyword id="KW-1003">Cell membrane</keyword>
<keyword id="KW-0139">CF(1)</keyword>
<keyword id="KW-0375">Hydrogen ion transport</keyword>
<keyword id="KW-0406">Ion transport</keyword>
<keyword id="KW-0472">Membrane</keyword>
<keyword id="KW-1185">Reference proteome</keyword>
<keyword id="KW-0813">Transport</keyword>
<gene>
    <name evidence="1" type="primary">atpC2</name>
    <name type="ordered locus">Bxeno_C0047</name>
    <name type="ORF">Bxe_C0048</name>
</gene>